<reference key="1">
    <citation type="journal article" date="1998" name="Science">
        <title>Genome sequence of an obligate intracellular pathogen of humans: Chlamydia trachomatis.</title>
        <authorList>
            <person name="Stephens R.S."/>
            <person name="Kalman S."/>
            <person name="Lammel C.J."/>
            <person name="Fan J."/>
            <person name="Marathe R."/>
            <person name="Aravind L."/>
            <person name="Mitchell W.P."/>
            <person name="Olinger L."/>
            <person name="Tatusov R.L."/>
            <person name="Zhao Q."/>
            <person name="Koonin E.V."/>
            <person name="Davis R.W."/>
        </authorList>
    </citation>
    <scope>NUCLEOTIDE SEQUENCE [LARGE SCALE GENOMIC DNA]</scope>
    <source>
        <strain>ATCC VR-885 / DSM 19411 / UW-3/Cx</strain>
    </source>
</reference>
<feature type="chain" id="PRO_0000181677" description="tRNA(Ile)-lysidine synthase">
    <location>
        <begin position="1"/>
        <end position="321"/>
    </location>
</feature>
<feature type="binding site" evidence="1">
    <location>
        <begin position="30"/>
        <end position="35"/>
    </location>
    <ligand>
        <name>ATP</name>
        <dbReference type="ChEBI" id="CHEBI:30616"/>
    </ligand>
</feature>
<name>TILS_CHLTR</name>
<keyword id="KW-0067">ATP-binding</keyword>
<keyword id="KW-0963">Cytoplasm</keyword>
<keyword id="KW-0436">Ligase</keyword>
<keyword id="KW-0547">Nucleotide-binding</keyword>
<keyword id="KW-1185">Reference proteome</keyword>
<keyword id="KW-0819">tRNA processing</keyword>
<accession>O84847</accession>
<protein>
    <recommendedName>
        <fullName evidence="1">tRNA(Ile)-lysidine synthase</fullName>
        <ecNumber evidence="1">6.3.4.19</ecNumber>
    </recommendedName>
    <alternativeName>
        <fullName evidence="1">tRNA(Ile)-2-lysyl-cytidine synthase</fullName>
    </alternativeName>
    <alternativeName>
        <fullName evidence="1">tRNA(Ile)-lysidine synthetase</fullName>
    </alternativeName>
</protein>
<proteinExistence type="inferred from homology"/>
<gene>
    <name evidence="1" type="primary">tilS</name>
    <name type="ordered locus">CT_840</name>
</gene>
<comment type="function">
    <text evidence="1">Ligates lysine onto the cytidine present at position 34 of the AUA codon-specific tRNA(Ile) that contains the anticodon CAU, in an ATP-dependent manner. Cytidine is converted to lysidine, thus changing the amino acid specificity of the tRNA from methionine to isoleucine.</text>
</comment>
<comment type="catalytic activity">
    <reaction evidence="1">
        <text>cytidine(34) in tRNA(Ile2) + L-lysine + ATP = lysidine(34) in tRNA(Ile2) + AMP + diphosphate + H(+)</text>
        <dbReference type="Rhea" id="RHEA:43744"/>
        <dbReference type="Rhea" id="RHEA-COMP:10625"/>
        <dbReference type="Rhea" id="RHEA-COMP:10670"/>
        <dbReference type="ChEBI" id="CHEBI:15378"/>
        <dbReference type="ChEBI" id="CHEBI:30616"/>
        <dbReference type="ChEBI" id="CHEBI:32551"/>
        <dbReference type="ChEBI" id="CHEBI:33019"/>
        <dbReference type="ChEBI" id="CHEBI:82748"/>
        <dbReference type="ChEBI" id="CHEBI:83665"/>
        <dbReference type="ChEBI" id="CHEBI:456215"/>
        <dbReference type="EC" id="6.3.4.19"/>
    </reaction>
</comment>
<comment type="subcellular location">
    <subcellularLocation>
        <location evidence="1">Cytoplasm</location>
    </subcellularLocation>
</comment>
<comment type="domain">
    <text>The N-terminal region contains the highly conserved SGGXDS motif, predicted to be a P-loop motif involved in ATP binding.</text>
</comment>
<comment type="similarity">
    <text evidence="1">Belongs to the tRNA(Ile)-lysidine synthase family.</text>
</comment>
<sequence length="321" mass="37332">MITRLFENDKQLEGFFSSLDKKKKYLLALSGGSDSLFLMYLLKSRAIFFTAVHVDYGWRETSYQEASDLAALCEQEQIPFILDRPEATDPMDSRDIENAARRYRYELFYRLCKEKCFSGVFLGHHADDQAETILKRVFEGAHLGNLKGMSAQVMYRDVALLRPLLHIPKHKIVEALDSHQVQYVQDITNCNERFLRARMRERLFPYLQDVFGKNIRDPLLSLAGDSAELREYLDQQTAPFLLRVVDNERGKLLPIEQELLKTSFLAKWVCKQFFLNERLVASKSFLQTVYDHLMTGSTARLRLRNRTVLVKARGVIIESIY</sequence>
<evidence type="ECO:0000255" key="1">
    <source>
        <dbReference type="HAMAP-Rule" id="MF_01161"/>
    </source>
</evidence>
<organism>
    <name type="scientific">Chlamydia trachomatis serovar D (strain ATCC VR-885 / DSM 19411 / UW-3/Cx)</name>
    <dbReference type="NCBI Taxonomy" id="272561"/>
    <lineage>
        <taxon>Bacteria</taxon>
        <taxon>Pseudomonadati</taxon>
        <taxon>Chlamydiota</taxon>
        <taxon>Chlamydiia</taxon>
        <taxon>Chlamydiales</taxon>
        <taxon>Chlamydiaceae</taxon>
        <taxon>Chlamydia/Chlamydophila group</taxon>
        <taxon>Chlamydia</taxon>
    </lineage>
</organism>
<dbReference type="EC" id="6.3.4.19" evidence="1"/>
<dbReference type="EMBL" id="AE001273">
    <property type="protein sequence ID" value="AAC68437.1"/>
    <property type="molecule type" value="Genomic_DNA"/>
</dbReference>
<dbReference type="PIR" id="C71463">
    <property type="entry name" value="C71463"/>
</dbReference>
<dbReference type="RefSeq" id="WP_010725364.1">
    <property type="nucleotide sequence ID" value="NC_000117.1"/>
</dbReference>
<dbReference type="SMR" id="O84847"/>
<dbReference type="STRING" id="272561.CT_840"/>
<dbReference type="EnsemblBacteria" id="AAC68437">
    <property type="protein sequence ID" value="AAC68437"/>
    <property type="gene ID" value="CT_840"/>
</dbReference>
<dbReference type="KEGG" id="ctr:CT_840"/>
<dbReference type="PATRIC" id="fig|272561.5.peg.927"/>
<dbReference type="HOGENOM" id="CLU_870675_0_0_0"/>
<dbReference type="InParanoid" id="O84847"/>
<dbReference type="OrthoDB" id="9807403at2"/>
<dbReference type="Proteomes" id="UP000000431">
    <property type="component" value="Chromosome"/>
</dbReference>
<dbReference type="GO" id="GO:0005737">
    <property type="term" value="C:cytoplasm"/>
    <property type="evidence" value="ECO:0007669"/>
    <property type="project" value="UniProtKB-SubCell"/>
</dbReference>
<dbReference type="GO" id="GO:0005524">
    <property type="term" value="F:ATP binding"/>
    <property type="evidence" value="ECO:0007669"/>
    <property type="project" value="UniProtKB-UniRule"/>
</dbReference>
<dbReference type="GO" id="GO:0032267">
    <property type="term" value="F:tRNA(Ile)-lysidine synthase activity"/>
    <property type="evidence" value="ECO:0007669"/>
    <property type="project" value="UniProtKB-EC"/>
</dbReference>
<dbReference type="GO" id="GO:0006400">
    <property type="term" value="P:tRNA modification"/>
    <property type="evidence" value="ECO:0007669"/>
    <property type="project" value="UniProtKB-UniRule"/>
</dbReference>
<dbReference type="CDD" id="cd01992">
    <property type="entry name" value="TilS_N"/>
    <property type="match status" value="1"/>
</dbReference>
<dbReference type="Gene3D" id="3.40.50.620">
    <property type="entry name" value="HUPs"/>
    <property type="match status" value="1"/>
</dbReference>
<dbReference type="HAMAP" id="MF_01161">
    <property type="entry name" value="tRNA_Ile_lys_synt"/>
    <property type="match status" value="1"/>
</dbReference>
<dbReference type="InterPro" id="IPR014729">
    <property type="entry name" value="Rossmann-like_a/b/a_fold"/>
</dbReference>
<dbReference type="InterPro" id="IPR011063">
    <property type="entry name" value="TilS/TtcA_N"/>
</dbReference>
<dbReference type="InterPro" id="IPR012094">
    <property type="entry name" value="tRNA_Ile_lys_synt"/>
</dbReference>
<dbReference type="InterPro" id="IPR012795">
    <property type="entry name" value="tRNA_Ile_lys_synt_N"/>
</dbReference>
<dbReference type="NCBIfam" id="TIGR02432">
    <property type="entry name" value="lysidine_TilS_N"/>
    <property type="match status" value="1"/>
</dbReference>
<dbReference type="PANTHER" id="PTHR43033">
    <property type="entry name" value="TRNA(ILE)-LYSIDINE SYNTHASE-RELATED"/>
    <property type="match status" value="1"/>
</dbReference>
<dbReference type="PANTHER" id="PTHR43033:SF1">
    <property type="entry name" value="TRNA(ILE)-LYSIDINE SYNTHASE-RELATED"/>
    <property type="match status" value="1"/>
</dbReference>
<dbReference type="Pfam" id="PF01171">
    <property type="entry name" value="ATP_bind_3"/>
    <property type="match status" value="1"/>
</dbReference>
<dbReference type="SUPFAM" id="SSF52402">
    <property type="entry name" value="Adenine nucleotide alpha hydrolases-like"/>
    <property type="match status" value="1"/>
</dbReference>